<dbReference type="EMBL" id="CP001013">
    <property type="protein sequence ID" value="ACB36125.1"/>
    <property type="molecule type" value="Genomic_DNA"/>
</dbReference>
<dbReference type="RefSeq" id="WP_012348872.1">
    <property type="nucleotide sequence ID" value="NC_010524.1"/>
</dbReference>
<dbReference type="SMR" id="B1Y7H7"/>
<dbReference type="STRING" id="395495.Lcho_3871"/>
<dbReference type="KEGG" id="lch:Lcho_3871"/>
<dbReference type="eggNOG" id="COG0080">
    <property type="taxonomic scope" value="Bacteria"/>
</dbReference>
<dbReference type="HOGENOM" id="CLU_074237_2_0_4"/>
<dbReference type="OrthoDB" id="9802408at2"/>
<dbReference type="Proteomes" id="UP000001693">
    <property type="component" value="Chromosome"/>
</dbReference>
<dbReference type="GO" id="GO:0022625">
    <property type="term" value="C:cytosolic large ribosomal subunit"/>
    <property type="evidence" value="ECO:0007669"/>
    <property type="project" value="TreeGrafter"/>
</dbReference>
<dbReference type="GO" id="GO:0070180">
    <property type="term" value="F:large ribosomal subunit rRNA binding"/>
    <property type="evidence" value="ECO:0007669"/>
    <property type="project" value="UniProtKB-UniRule"/>
</dbReference>
<dbReference type="GO" id="GO:0003735">
    <property type="term" value="F:structural constituent of ribosome"/>
    <property type="evidence" value="ECO:0007669"/>
    <property type="project" value="InterPro"/>
</dbReference>
<dbReference type="GO" id="GO:0006412">
    <property type="term" value="P:translation"/>
    <property type="evidence" value="ECO:0007669"/>
    <property type="project" value="UniProtKB-UniRule"/>
</dbReference>
<dbReference type="CDD" id="cd00349">
    <property type="entry name" value="Ribosomal_L11"/>
    <property type="match status" value="1"/>
</dbReference>
<dbReference type="FunFam" id="1.10.10.250:FF:000001">
    <property type="entry name" value="50S ribosomal protein L11"/>
    <property type="match status" value="1"/>
</dbReference>
<dbReference type="FunFam" id="3.30.1550.10:FF:000001">
    <property type="entry name" value="50S ribosomal protein L11"/>
    <property type="match status" value="1"/>
</dbReference>
<dbReference type="Gene3D" id="1.10.10.250">
    <property type="entry name" value="Ribosomal protein L11, C-terminal domain"/>
    <property type="match status" value="1"/>
</dbReference>
<dbReference type="Gene3D" id="3.30.1550.10">
    <property type="entry name" value="Ribosomal protein L11/L12, N-terminal domain"/>
    <property type="match status" value="1"/>
</dbReference>
<dbReference type="HAMAP" id="MF_00736">
    <property type="entry name" value="Ribosomal_uL11"/>
    <property type="match status" value="1"/>
</dbReference>
<dbReference type="InterPro" id="IPR000911">
    <property type="entry name" value="Ribosomal_uL11"/>
</dbReference>
<dbReference type="InterPro" id="IPR006519">
    <property type="entry name" value="Ribosomal_uL11_bac-typ"/>
</dbReference>
<dbReference type="InterPro" id="IPR020783">
    <property type="entry name" value="Ribosomal_uL11_C"/>
</dbReference>
<dbReference type="InterPro" id="IPR036769">
    <property type="entry name" value="Ribosomal_uL11_C_sf"/>
</dbReference>
<dbReference type="InterPro" id="IPR020785">
    <property type="entry name" value="Ribosomal_uL11_CS"/>
</dbReference>
<dbReference type="InterPro" id="IPR020784">
    <property type="entry name" value="Ribosomal_uL11_N"/>
</dbReference>
<dbReference type="InterPro" id="IPR036796">
    <property type="entry name" value="Ribosomal_uL11_N_sf"/>
</dbReference>
<dbReference type="NCBIfam" id="TIGR01632">
    <property type="entry name" value="L11_bact"/>
    <property type="match status" value="1"/>
</dbReference>
<dbReference type="PANTHER" id="PTHR11661">
    <property type="entry name" value="60S RIBOSOMAL PROTEIN L12"/>
    <property type="match status" value="1"/>
</dbReference>
<dbReference type="PANTHER" id="PTHR11661:SF1">
    <property type="entry name" value="LARGE RIBOSOMAL SUBUNIT PROTEIN UL11M"/>
    <property type="match status" value="1"/>
</dbReference>
<dbReference type="Pfam" id="PF00298">
    <property type="entry name" value="Ribosomal_L11"/>
    <property type="match status" value="1"/>
</dbReference>
<dbReference type="Pfam" id="PF03946">
    <property type="entry name" value="Ribosomal_L11_N"/>
    <property type="match status" value="1"/>
</dbReference>
<dbReference type="SMART" id="SM00649">
    <property type="entry name" value="RL11"/>
    <property type="match status" value="1"/>
</dbReference>
<dbReference type="SUPFAM" id="SSF54747">
    <property type="entry name" value="Ribosomal L11/L12e N-terminal domain"/>
    <property type="match status" value="1"/>
</dbReference>
<dbReference type="SUPFAM" id="SSF46906">
    <property type="entry name" value="Ribosomal protein L11, C-terminal domain"/>
    <property type="match status" value="1"/>
</dbReference>
<dbReference type="PROSITE" id="PS00359">
    <property type="entry name" value="RIBOSOMAL_L11"/>
    <property type="match status" value="1"/>
</dbReference>
<protein>
    <recommendedName>
        <fullName evidence="1">Large ribosomal subunit protein uL11</fullName>
    </recommendedName>
    <alternativeName>
        <fullName evidence="2">50S ribosomal protein L11</fullName>
    </alternativeName>
</protein>
<reference key="1">
    <citation type="submission" date="2008-03" db="EMBL/GenBank/DDBJ databases">
        <title>Complete sequence of Leptothrix cholodnii SP-6.</title>
        <authorList>
            <consortium name="US DOE Joint Genome Institute"/>
            <person name="Copeland A."/>
            <person name="Lucas S."/>
            <person name="Lapidus A."/>
            <person name="Glavina del Rio T."/>
            <person name="Dalin E."/>
            <person name="Tice H."/>
            <person name="Bruce D."/>
            <person name="Goodwin L."/>
            <person name="Pitluck S."/>
            <person name="Chertkov O."/>
            <person name="Brettin T."/>
            <person name="Detter J.C."/>
            <person name="Han C."/>
            <person name="Kuske C.R."/>
            <person name="Schmutz J."/>
            <person name="Larimer F."/>
            <person name="Land M."/>
            <person name="Hauser L."/>
            <person name="Kyrpides N."/>
            <person name="Lykidis A."/>
            <person name="Emerson D."/>
            <person name="Richardson P."/>
        </authorList>
    </citation>
    <scope>NUCLEOTIDE SEQUENCE [LARGE SCALE GENOMIC DNA]</scope>
    <source>
        <strain>ATCC 51168 / LMG 8142 / SP-6</strain>
    </source>
</reference>
<sequence>MAKKIVGFIKLQVPAGKANPSPPIGPALGQRGLNIMEFCKAFNAQTQGIEPGLKLPVVITAYADKSFTFILKSPPASVLLKKAAKIDKGSPRPHLEKVAKLTRAQLEEIAKIKVKDLTAANMDAAVRTIAGSARSMGINVEGV</sequence>
<proteinExistence type="inferred from homology"/>
<name>RL11_LEPCP</name>
<keyword id="KW-0488">Methylation</keyword>
<keyword id="KW-1185">Reference proteome</keyword>
<keyword id="KW-0687">Ribonucleoprotein</keyword>
<keyword id="KW-0689">Ribosomal protein</keyword>
<keyword id="KW-0694">RNA-binding</keyword>
<keyword id="KW-0699">rRNA-binding</keyword>
<evidence type="ECO:0000255" key="1">
    <source>
        <dbReference type="HAMAP-Rule" id="MF_00736"/>
    </source>
</evidence>
<evidence type="ECO:0000305" key="2"/>
<gene>
    <name evidence="1" type="primary">rplK</name>
    <name type="ordered locus">Lcho_3871</name>
</gene>
<organism>
    <name type="scientific">Leptothrix cholodnii (strain ATCC 51168 / LMG 8142 / SP-6)</name>
    <name type="common">Leptothrix discophora (strain SP-6)</name>
    <dbReference type="NCBI Taxonomy" id="395495"/>
    <lineage>
        <taxon>Bacteria</taxon>
        <taxon>Pseudomonadati</taxon>
        <taxon>Pseudomonadota</taxon>
        <taxon>Betaproteobacteria</taxon>
        <taxon>Burkholderiales</taxon>
        <taxon>Sphaerotilaceae</taxon>
        <taxon>Leptothrix</taxon>
    </lineage>
</organism>
<comment type="function">
    <text evidence="1">Forms part of the ribosomal stalk which helps the ribosome interact with GTP-bound translation factors.</text>
</comment>
<comment type="subunit">
    <text evidence="1">Part of the ribosomal stalk of the 50S ribosomal subunit. Interacts with L10 and the large rRNA to form the base of the stalk. L10 forms an elongated spine to which L12 dimers bind in a sequential fashion forming a multimeric L10(L12)X complex.</text>
</comment>
<comment type="PTM">
    <text evidence="1">One or more lysine residues are methylated.</text>
</comment>
<comment type="similarity">
    <text evidence="1">Belongs to the universal ribosomal protein uL11 family.</text>
</comment>
<accession>B1Y7H7</accession>
<feature type="chain" id="PRO_1000195662" description="Large ribosomal subunit protein uL11">
    <location>
        <begin position="1"/>
        <end position="143"/>
    </location>
</feature>